<comment type="function">
    <text evidence="1">Cell wall formation. Catalyzes the transfer of a GlcNAc subunit on undecaprenyl-pyrophosphoryl-MurNAc-pentapeptide (lipid intermediate I) to form undecaprenyl-pyrophosphoryl-MurNAc-(pentapeptide)GlcNAc (lipid intermediate II).</text>
</comment>
<comment type="catalytic activity">
    <reaction evidence="1">
        <text>Mur2Ac(oyl-L-Ala-gamma-D-Glu-L-Lys-D-Ala-D-Ala)-di-trans,octa-cis-undecaprenyl diphosphate + UDP-N-acetyl-alpha-D-glucosamine = beta-D-GlcNAc-(1-&gt;4)-Mur2Ac(oyl-L-Ala-gamma-D-Glu-L-Lys-D-Ala-D-Ala)-di-trans,octa-cis-undecaprenyl diphosphate + UDP + H(+)</text>
        <dbReference type="Rhea" id="RHEA:23192"/>
        <dbReference type="ChEBI" id="CHEBI:15378"/>
        <dbReference type="ChEBI" id="CHEBI:57705"/>
        <dbReference type="ChEBI" id="CHEBI:58223"/>
        <dbReference type="ChEBI" id="CHEBI:60032"/>
        <dbReference type="ChEBI" id="CHEBI:60033"/>
        <dbReference type="EC" id="2.4.1.227"/>
    </reaction>
</comment>
<comment type="pathway">
    <text evidence="1">Cell wall biogenesis; peptidoglycan biosynthesis.</text>
</comment>
<comment type="subcellular location">
    <subcellularLocation>
        <location evidence="1">Cell membrane</location>
        <topology evidence="1">Peripheral membrane protein</topology>
        <orientation evidence="1">Cytoplasmic side</orientation>
    </subcellularLocation>
</comment>
<comment type="similarity">
    <text evidence="1">Belongs to the glycosyltransferase 28 family. MurG subfamily.</text>
</comment>
<accession>Q4L6C8</accession>
<reference key="1">
    <citation type="journal article" date="2005" name="J. Bacteriol.">
        <title>Whole-genome sequencing of Staphylococcus haemolyticus uncovers the extreme plasticity of its genome and the evolution of human-colonizing staphylococcal species.</title>
        <authorList>
            <person name="Takeuchi F."/>
            <person name="Watanabe S."/>
            <person name="Baba T."/>
            <person name="Yuzawa H."/>
            <person name="Ito T."/>
            <person name="Morimoto Y."/>
            <person name="Kuroda M."/>
            <person name="Cui L."/>
            <person name="Takahashi M."/>
            <person name="Ankai A."/>
            <person name="Baba S."/>
            <person name="Fukui S."/>
            <person name="Lee J.C."/>
            <person name="Hiramatsu K."/>
        </authorList>
    </citation>
    <scope>NUCLEOTIDE SEQUENCE [LARGE SCALE GENOMIC DNA]</scope>
    <source>
        <strain>JCSC1435</strain>
    </source>
</reference>
<gene>
    <name evidence="1" type="primary">murG</name>
    <name type="ordered locus">SH1488</name>
</gene>
<sequence>MSKIAFTGGGTVGHVSVNLSLIPTATDKGHDAFYIGSKTGIEREMIESQLPNIEYYPISSGKLRRYLSVDNAKDVFKVLKGVIDARKVLKREKPDLLFSKGGFVSVPVVIAARSLNIPTIIHESDLTPGLANKISLKFAKKIYTTFEDTLKYLPKDKADFVGATIRQDLKEGNQSRGYQLTGFDASKKVLLVMGGSLGSKKLNQAIRENLEALLQDYQIIHLTGHGLVDSSIDAKGYVQYEFVKEELTDLLAITDTVVSRAGSNAIYEFLTLRIPMLLIPLGLDQSRGDQIDNAENFESKGYGRTIPEDQLTQVKLLEQLKEIENDRESIIKQMETYRESYTKEDLFNKILKDAL</sequence>
<protein>
    <recommendedName>
        <fullName evidence="1">UDP-N-acetylglucosamine--N-acetylmuramyl-(pentapeptide) pyrophosphoryl-undecaprenol N-acetylglucosamine transferase</fullName>
        <ecNumber evidence="1">2.4.1.227</ecNumber>
    </recommendedName>
    <alternativeName>
        <fullName evidence="1">Undecaprenyl-PP-MurNAc-pentapeptide-UDPGlcNAc GlcNAc transferase</fullName>
    </alternativeName>
</protein>
<feature type="chain" id="PRO_0000109218" description="UDP-N-acetylglucosamine--N-acetylmuramyl-(pentapeptide) pyrophosphoryl-undecaprenol N-acetylglucosamine transferase">
    <location>
        <begin position="1"/>
        <end position="355"/>
    </location>
</feature>
<feature type="binding site" evidence="1">
    <location>
        <position position="166"/>
    </location>
    <ligand>
        <name>UDP-N-acetyl-alpha-D-glucosamine</name>
        <dbReference type="ChEBI" id="CHEBI:57705"/>
    </ligand>
</feature>
<feature type="binding site" evidence="1">
    <location>
        <position position="196"/>
    </location>
    <ligand>
        <name>UDP-N-acetyl-alpha-D-glucosamine</name>
        <dbReference type="ChEBI" id="CHEBI:57705"/>
    </ligand>
</feature>
<feature type="binding site" evidence="1">
    <location>
        <position position="290"/>
    </location>
    <ligand>
        <name>UDP-N-acetyl-alpha-D-glucosamine</name>
        <dbReference type="ChEBI" id="CHEBI:57705"/>
    </ligand>
</feature>
<keyword id="KW-0131">Cell cycle</keyword>
<keyword id="KW-0132">Cell division</keyword>
<keyword id="KW-1003">Cell membrane</keyword>
<keyword id="KW-0133">Cell shape</keyword>
<keyword id="KW-0961">Cell wall biogenesis/degradation</keyword>
<keyword id="KW-0328">Glycosyltransferase</keyword>
<keyword id="KW-0472">Membrane</keyword>
<keyword id="KW-0573">Peptidoglycan synthesis</keyword>
<keyword id="KW-0808">Transferase</keyword>
<organism>
    <name type="scientific">Staphylococcus haemolyticus (strain JCSC1435)</name>
    <dbReference type="NCBI Taxonomy" id="279808"/>
    <lineage>
        <taxon>Bacteria</taxon>
        <taxon>Bacillati</taxon>
        <taxon>Bacillota</taxon>
        <taxon>Bacilli</taxon>
        <taxon>Bacillales</taxon>
        <taxon>Staphylococcaceae</taxon>
        <taxon>Staphylococcus</taxon>
    </lineage>
</organism>
<name>MURG_STAHJ</name>
<dbReference type="EC" id="2.4.1.227" evidence="1"/>
<dbReference type="EMBL" id="AP006716">
    <property type="protein sequence ID" value="BAE04797.1"/>
    <property type="molecule type" value="Genomic_DNA"/>
</dbReference>
<dbReference type="RefSeq" id="WP_011275783.1">
    <property type="nucleotide sequence ID" value="NC_007168.1"/>
</dbReference>
<dbReference type="SMR" id="Q4L6C8"/>
<dbReference type="CAZy" id="GT28">
    <property type="family name" value="Glycosyltransferase Family 28"/>
</dbReference>
<dbReference type="KEGG" id="sha:SH1488"/>
<dbReference type="eggNOG" id="COG0707">
    <property type="taxonomic scope" value="Bacteria"/>
</dbReference>
<dbReference type="HOGENOM" id="CLU_037404_0_0_9"/>
<dbReference type="OrthoDB" id="9808936at2"/>
<dbReference type="UniPathway" id="UPA00219"/>
<dbReference type="Proteomes" id="UP000000543">
    <property type="component" value="Chromosome"/>
</dbReference>
<dbReference type="GO" id="GO:0005886">
    <property type="term" value="C:plasma membrane"/>
    <property type="evidence" value="ECO:0007669"/>
    <property type="project" value="UniProtKB-SubCell"/>
</dbReference>
<dbReference type="GO" id="GO:0050511">
    <property type="term" value="F:undecaprenyldiphospho-muramoylpentapeptide beta-N-acetylglucosaminyltransferase activity"/>
    <property type="evidence" value="ECO:0007669"/>
    <property type="project" value="UniProtKB-UniRule"/>
</dbReference>
<dbReference type="GO" id="GO:0005975">
    <property type="term" value="P:carbohydrate metabolic process"/>
    <property type="evidence" value="ECO:0007669"/>
    <property type="project" value="InterPro"/>
</dbReference>
<dbReference type="GO" id="GO:0051301">
    <property type="term" value="P:cell division"/>
    <property type="evidence" value="ECO:0007669"/>
    <property type="project" value="UniProtKB-KW"/>
</dbReference>
<dbReference type="GO" id="GO:0071555">
    <property type="term" value="P:cell wall organization"/>
    <property type="evidence" value="ECO:0007669"/>
    <property type="project" value="UniProtKB-KW"/>
</dbReference>
<dbReference type="GO" id="GO:0030259">
    <property type="term" value="P:lipid glycosylation"/>
    <property type="evidence" value="ECO:0007669"/>
    <property type="project" value="UniProtKB-UniRule"/>
</dbReference>
<dbReference type="GO" id="GO:0009252">
    <property type="term" value="P:peptidoglycan biosynthetic process"/>
    <property type="evidence" value="ECO:0007669"/>
    <property type="project" value="UniProtKB-UniRule"/>
</dbReference>
<dbReference type="GO" id="GO:0008360">
    <property type="term" value="P:regulation of cell shape"/>
    <property type="evidence" value="ECO:0007669"/>
    <property type="project" value="UniProtKB-KW"/>
</dbReference>
<dbReference type="CDD" id="cd03785">
    <property type="entry name" value="GT28_MurG"/>
    <property type="match status" value="1"/>
</dbReference>
<dbReference type="Gene3D" id="3.40.50.2000">
    <property type="entry name" value="Glycogen Phosphorylase B"/>
    <property type="match status" value="2"/>
</dbReference>
<dbReference type="HAMAP" id="MF_00033">
    <property type="entry name" value="MurG"/>
    <property type="match status" value="1"/>
</dbReference>
<dbReference type="InterPro" id="IPR006009">
    <property type="entry name" value="GlcNAc_MurG"/>
</dbReference>
<dbReference type="InterPro" id="IPR007235">
    <property type="entry name" value="Glyco_trans_28_C"/>
</dbReference>
<dbReference type="InterPro" id="IPR004276">
    <property type="entry name" value="GlycoTrans_28_N"/>
</dbReference>
<dbReference type="NCBIfam" id="NF009102">
    <property type="entry name" value="PRK12446.1"/>
    <property type="match status" value="1"/>
</dbReference>
<dbReference type="PANTHER" id="PTHR21015:SF27">
    <property type="entry name" value="UDP-N-ACETYLGLUCOSAMINE--N-ACETYLMURAMYL-(PENTAPEPTIDE) PYROPHOSPHORYL-UNDECAPRENOL N-ACETYLGLUCOSAMINE TRANSFERASE"/>
    <property type="match status" value="1"/>
</dbReference>
<dbReference type="PANTHER" id="PTHR21015">
    <property type="entry name" value="UDP-N-ACETYLGLUCOSAMINE--N-ACETYLMURAMYL-(PENTAPEPTIDE) PYROPHOSPHORYL-UNDECAPRENOL N-ACETYLGLUCOSAMINE TRANSFERASE 1"/>
    <property type="match status" value="1"/>
</dbReference>
<dbReference type="Pfam" id="PF04101">
    <property type="entry name" value="Glyco_tran_28_C"/>
    <property type="match status" value="1"/>
</dbReference>
<dbReference type="Pfam" id="PF03033">
    <property type="entry name" value="Glyco_transf_28"/>
    <property type="match status" value="1"/>
</dbReference>
<dbReference type="SUPFAM" id="SSF53756">
    <property type="entry name" value="UDP-Glycosyltransferase/glycogen phosphorylase"/>
    <property type="match status" value="1"/>
</dbReference>
<evidence type="ECO:0000255" key="1">
    <source>
        <dbReference type="HAMAP-Rule" id="MF_00033"/>
    </source>
</evidence>
<proteinExistence type="inferred from homology"/>